<name>RL31B_BACVZ</name>
<dbReference type="EMBL" id="CP000560">
    <property type="protein sequence ID" value="ABS75129.1"/>
    <property type="molecule type" value="Genomic_DNA"/>
</dbReference>
<dbReference type="RefSeq" id="WP_007613295.1">
    <property type="nucleotide sequence ID" value="NC_009725.2"/>
</dbReference>
<dbReference type="SMR" id="A7Z803"/>
<dbReference type="GeneID" id="93081913"/>
<dbReference type="KEGG" id="bay:RBAM_027710"/>
<dbReference type="HOGENOM" id="CLU_114306_2_2_9"/>
<dbReference type="Proteomes" id="UP000001120">
    <property type="component" value="Chromosome"/>
</dbReference>
<dbReference type="GO" id="GO:1990904">
    <property type="term" value="C:ribonucleoprotein complex"/>
    <property type="evidence" value="ECO:0007669"/>
    <property type="project" value="UniProtKB-KW"/>
</dbReference>
<dbReference type="GO" id="GO:0005840">
    <property type="term" value="C:ribosome"/>
    <property type="evidence" value="ECO:0007669"/>
    <property type="project" value="UniProtKB-KW"/>
</dbReference>
<dbReference type="GO" id="GO:0003735">
    <property type="term" value="F:structural constituent of ribosome"/>
    <property type="evidence" value="ECO:0007669"/>
    <property type="project" value="InterPro"/>
</dbReference>
<dbReference type="GO" id="GO:0006412">
    <property type="term" value="P:translation"/>
    <property type="evidence" value="ECO:0007669"/>
    <property type="project" value="UniProtKB-UniRule"/>
</dbReference>
<dbReference type="Gene3D" id="4.10.830.30">
    <property type="entry name" value="Ribosomal protein L31"/>
    <property type="match status" value="1"/>
</dbReference>
<dbReference type="HAMAP" id="MF_00502">
    <property type="entry name" value="Ribosomal_bL31_2"/>
    <property type="match status" value="1"/>
</dbReference>
<dbReference type="InterPro" id="IPR034704">
    <property type="entry name" value="Ribosomal_bL28/bL31-like_sf"/>
</dbReference>
<dbReference type="InterPro" id="IPR002150">
    <property type="entry name" value="Ribosomal_bL31"/>
</dbReference>
<dbReference type="InterPro" id="IPR027493">
    <property type="entry name" value="Ribosomal_bL31_B"/>
</dbReference>
<dbReference type="InterPro" id="IPR042105">
    <property type="entry name" value="Ribosomal_bL31_sf"/>
</dbReference>
<dbReference type="NCBIfam" id="TIGR00105">
    <property type="entry name" value="L31"/>
    <property type="match status" value="1"/>
</dbReference>
<dbReference type="NCBIfam" id="NF002462">
    <property type="entry name" value="PRK01678.1"/>
    <property type="match status" value="1"/>
</dbReference>
<dbReference type="PANTHER" id="PTHR33280">
    <property type="entry name" value="50S RIBOSOMAL PROTEIN L31, CHLOROPLASTIC"/>
    <property type="match status" value="1"/>
</dbReference>
<dbReference type="PANTHER" id="PTHR33280:SF1">
    <property type="entry name" value="LARGE RIBOSOMAL SUBUNIT PROTEIN BL31C"/>
    <property type="match status" value="1"/>
</dbReference>
<dbReference type="Pfam" id="PF01197">
    <property type="entry name" value="Ribosomal_L31"/>
    <property type="match status" value="1"/>
</dbReference>
<dbReference type="PRINTS" id="PR01249">
    <property type="entry name" value="RIBOSOMALL31"/>
</dbReference>
<dbReference type="SUPFAM" id="SSF143800">
    <property type="entry name" value="L28p-like"/>
    <property type="match status" value="1"/>
</dbReference>
<dbReference type="PROSITE" id="PS01143">
    <property type="entry name" value="RIBOSOMAL_L31"/>
    <property type="match status" value="1"/>
</dbReference>
<proteinExistence type="inferred from homology"/>
<organism>
    <name type="scientific">Bacillus velezensis (strain DSM 23117 / BGSC 10A6 / LMG 26770 / FZB42)</name>
    <name type="common">Bacillus amyloliquefaciens subsp. plantarum</name>
    <dbReference type="NCBI Taxonomy" id="326423"/>
    <lineage>
        <taxon>Bacteria</taxon>
        <taxon>Bacillati</taxon>
        <taxon>Bacillota</taxon>
        <taxon>Bacilli</taxon>
        <taxon>Bacillales</taxon>
        <taxon>Bacillaceae</taxon>
        <taxon>Bacillus</taxon>
        <taxon>Bacillus amyloliquefaciens group</taxon>
    </lineage>
</organism>
<feature type="chain" id="PRO_1000014683" description="Large ribosomal subunit protein bL31B">
    <location>
        <begin position="1"/>
        <end position="82"/>
    </location>
</feature>
<protein>
    <recommendedName>
        <fullName evidence="1">Large ribosomal subunit protein bL31B</fullName>
    </recommendedName>
    <alternativeName>
        <fullName evidence="2">50S ribosomal protein L31 type B</fullName>
    </alternativeName>
</protein>
<keyword id="KW-0687">Ribonucleoprotein</keyword>
<keyword id="KW-0689">Ribosomal protein</keyword>
<comment type="subunit">
    <text evidence="1">Part of the 50S ribosomal subunit.</text>
</comment>
<comment type="similarity">
    <text evidence="1">Belongs to the bacterial ribosomal protein bL31 family. Type B subfamily.</text>
</comment>
<accession>A7Z803</accession>
<gene>
    <name evidence="1" type="primary">rpmE2</name>
    <name type="ordered locus">RBAM_027710</name>
</gene>
<reference key="1">
    <citation type="journal article" date="2007" name="Nat. Biotechnol.">
        <title>Comparative analysis of the complete genome sequence of the plant growth-promoting bacterium Bacillus amyloliquefaciens FZB42.</title>
        <authorList>
            <person name="Chen X.H."/>
            <person name="Koumoutsi A."/>
            <person name="Scholz R."/>
            <person name="Eisenreich A."/>
            <person name="Schneider K."/>
            <person name="Heinemeyer I."/>
            <person name="Morgenstern B."/>
            <person name="Voss B."/>
            <person name="Hess W.R."/>
            <person name="Reva O."/>
            <person name="Junge H."/>
            <person name="Voigt B."/>
            <person name="Jungblut P.R."/>
            <person name="Vater J."/>
            <person name="Suessmuth R."/>
            <person name="Liesegang H."/>
            <person name="Strittmatter A."/>
            <person name="Gottschalk G."/>
            <person name="Borriss R."/>
        </authorList>
    </citation>
    <scope>NUCLEOTIDE SEQUENCE [LARGE SCALE GENOMIC DNA]</scope>
    <source>
        <strain>DSM 23117 / BGSC 10A6 / LMG 26770 / FZB42</strain>
    </source>
</reference>
<evidence type="ECO:0000255" key="1">
    <source>
        <dbReference type="HAMAP-Rule" id="MF_00502"/>
    </source>
</evidence>
<evidence type="ECO:0000305" key="2"/>
<sequence>MKKDIHPDNHQVIFQDVNSGYRFLSHSTKKSEETAEWEDGKTYPLIKVEVSSDTHPFYTGRQKFNEKGGRVEQFNKKYNMGK</sequence>